<organism>
    <name type="scientific">Gloeothece citriformis (strain PCC 7424)</name>
    <name type="common">Cyanothece sp. (strain PCC 7424)</name>
    <dbReference type="NCBI Taxonomy" id="65393"/>
    <lineage>
        <taxon>Bacteria</taxon>
        <taxon>Bacillati</taxon>
        <taxon>Cyanobacteriota</taxon>
        <taxon>Cyanophyceae</taxon>
        <taxon>Oscillatoriophycideae</taxon>
        <taxon>Chroococcales</taxon>
        <taxon>Aphanothecaceae</taxon>
        <taxon>Gloeothece</taxon>
        <taxon>Gloeothece citriformis</taxon>
    </lineage>
</organism>
<keyword id="KW-1185">Reference proteome</keyword>
<keyword id="KW-0687">Ribonucleoprotein</keyword>
<keyword id="KW-0689">Ribosomal protein</keyword>
<keyword id="KW-0694">RNA-binding</keyword>
<keyword id="KW-0699">rRNA-binding</keyword>
<accession>B7KI03</accession>
<proteinExistence type="inferred from homology"/>
<sequence length="173" mass="18211">MAKRRKSSRTKEKETNWQERVIQIRRVSKVVKGGKKLSFRAIVVVGNETGQVGVGVGKAGDVIGAVRKGVADGKKQLIEVPLTKASSIPHLTNGASGGASVIMRPAAPGTGVIAGGAVRTVLELAGVKNILAKQLGSDNPLNNARAAINALETLRTFSEVAKERDVPLEHIYS</sequence>
<comment type="function">
    <text evidence="1">With S4 and S12 plays an important role in translational accuracy.</text>
</comment>
<comment type="function">
    <text evidence="1">Located at the back of the 30S subunit body where it stabilizes the conformation of the head with respect to the body.</text>
</comment>
<comment type="subunit">
    <text evidence="1">Part of the 30S ribosomal subunit. Contacts proteins S4 and S8.</text>
</comment>
<comment type="domain">
    <text>The N-terminal domain interacts with the head of the 30S subunit; the C-terminal domain interacts with the body and contacts protein S4. The interaction surface between S4 and S5 is involved in control of translational fidelity.</text>
</comment>
<comment type="similarity">
    <text evidence="1">Belongs to the universal ribosomal protein uS5 family.</text>
</comment>
<name>RS5_GLOC7</name>
<reference key="1">
    <citation type="journal article" date="2011" name="MBio">
        <title>Novel metabolic attributes of the genus Cyanothece, comprising a group of unicellular nitrogen-fixing Cyanobacteria.</title>
        <authorList>
            <person name="Bandyopadhyay A."/>
            <person name="Elvitigala T."/>
            <person name="Welsh E."/>
            <person name="Stockel J."/>
            <person name="Liberton M."/>
            <person name="Min H."/>
            <person name="Sherman L.A."/>
            <person name="Pakrasi H.B."/>
        </authorList>
    </citation>
    <scope>NUCLEOTIDE SEQUENCE [LARGE SCALE GENOMIC DNA]</scope>
    <source>
        <strain>PCC 7424</strain>
    </source>
</reference>
<feature type="chain" id="PRO_1000140853" description="Small ribosomal subunit protein uS5">
    <location>
        <begin position="1"/>
        <end position="173"/>
    </location>
</feature>
<feature type="domain" description="S5 DRBM" evidence="1">
    <location>
        <begin position="17"/>
        <end position="80"/>
    </location>
</feature>
<gene>
    <name evidence="1" type="primary">rpsE</name>
    <name evidence="1" type="synonym">rps5</name>
    <name type="ordered locus">PCC7424_3719</name>
</gene>
<protein>
    <recommendedName>
        <fullName evidence="1">Small ribosomal subunit protein uS5</fullName>
    </recommendedName>
    <alternativeName>
        <fullName evidence="2">30S ribosomal protein S5</fullName>
    </alternativeName>
</protein>
<dbReference type="EMBL" id="CP001291">
    <property type="protein sequence ID" value="ACK72100.1"/>
    <property type="molecule type" value="Genomic_DNA"/>
</dbReference>
<dbReference type="RefSeq" id="WP_015955693.1">
    <property type="nucleotide sequence ID" value="NC_011729.1"/>
</dbReference>
<dbReference type="SMR" id="B7KI03"/>
<dbReference type="STRING" id="65393.PCC7424_3719"/>
<dbReference type="KEGG" id="cyc:PCC7424_3719"/>
<dbReference type="eggNOG" id="COG0098">
    <property type="taxonomic scope" value="Bacteria"/>
</dbReference>
<dbReference type="HOGENOM" id="CLU_065898_2_2_3"/>
<dbReference type="OrthoDB" id="9809045at2"/>
<dbReference type="Proteomes" id="UP000002384">
    <property type="component" value="Chromosome"/>
</dbReference>
<dbReference type="GO" id="GO:0015935">
    <property type="term" value="C:small ribosomal subunit"/>
    <property type="evidence" value="ECO:0007669"/>
    <property type="project" value="InterPro"/>
</dbReference>
<dbReference type="GO" id="GO:0019843">
    <property type="term" value="F:rRNA binding"/>
    <property type="evidence" value="ECO:0007669"/>
    <property type="project" value="UniProtKB-UniRule"/>
</dbReference>
<dbReference type="GO" id="GO:0003735">
    <property type="term" value="F:structural constituent of ribosome"/>
    <property type="evidence" value="ECO:0007669"/>
    <property type="project" value="InterPro"/>
</dbReference>
<dbReference type="GO" id="GO:0006412">
    <property type="term" value="P:translation"/>
    <property type="evidence" value="ECO:0007669"/>
    <property type="project" value="UniProtKB-UniRule"/>
</dbReference>
<dbReference type="FunFam" id="3.30.160.20:FF:000001">
    <property type="entry name" value="30S ribosomal protein S5"/>
    <property type="match status" value="1"/>
</dbReference>
<dbReference type="FunFam" id="3.30.230.10:FF:000002">
    <property type="entry name" value="30S ribosomal protein S5"/>
    <property type="match status" value="1"/>
</dbReference>
<dbReference type="Gene3D" id="3.30.160.20">
    <property type="match status" value="1"/>
</dbReference>
<dbReference type="Gene3D" id="3.30.230.10">
    <property type="match status" value="1"/>
</dbReference>
<dbReference type="HAMAP" id="MF_01307_B">
    <property type="entry name" value="Ribosomal_uS5_B"/>
    <property type="match status" value="1"/>
</dbReference>
<dbReference type="InterPro" id="IPR020568">
    <property type="entry name" value="Ribosomal_Su5_D2-typ_SF"/>
</dbReference>
<dbReference type="InterPro" id="IPR000851">
    <property type="entry name" value="Ribosomal_uS5"/>
</dbReference>
<dbReference type="InterPro" id="IPR005712">
    <property type="entry name" value="Ribosomal_uS5_bac-type"/>
</dbReference>
<dbReference type="InterPro" id="IPR005324">
    <property type="entry name" value="Ribosomal_uS5_C"/>
</dbReference>
<dbReference type="InterPro" id="IPR013810">
    <property type="entry name" value="Ribosomal_uS5_N"/>
</dbReference>
<dbReference type="InterPro" id="IPR018192">
    <property type="entry name" value="Ribosomal_uS5_N_CS"/>
</dbReference>
<dbReference type="InterPro" id="IPR014721">
    <property type="entry name" value="Ribsml_uS5_D2-typ_fold_subgr"/>
</dbReference>
<dbReference type="NCBIfam" id="TIGR01021">
    <property type="entry name" value="rpsE_bact"/>
    <property type="match status" value="1"/>
</dbReference>
<dbReference type="PANTHER" id="PTHR48277">
    <property type="entry name" value="MITOCHONDRIAL RIBOSOMAL PROTEIN S5"/>
    <property type="match status" value="1"/>
</dbReference>
<dbReference type="PANTHER" id="PTHR48277:SF1">
    <property type="entry name" value="MITOCHONDRIAL RIBOSOMAL PROTEIN S5"/>
    <property type="match status" value="1"/>
</dbReference>
<dbReference type="Pfam" id="PF00333">
    <property type="entry name" value="Ribosomal_S5"/>
    <property type="match status" value="1"/>
</dbReference>
<dbReference type="Pfam" id="PF03719">
    <property type="entry name" value="Ribosomal_S5_C"/>
    <property type="match status" value="1"/>
</dbReference>
<dbReference type="SUPFAM" id="SSF54768">
    <property type="entry name" value="dsRNA-binding domain-like"/>
    <property type="match status" value="1"/>
</dbReference>
<dbReference type="SUPFAM" id="SSF54211">
    <property type="entry name" value="Ribosomal protein S5 domain 2-like"/>
    <property type="match status" value="1"/>
</dbReference>
<dbReference type="PROSITE" id="PS00585">
    <property type="entry name" value="RIBOSOMAL_S5"/>
    <property type="match status" value="1"/>
</dbReference>
<dbReference type="PROSITE" id="PS50881">
    <property type="entry name" value="S5_DSRBD"/>
    <property type="match status" value="1"/>
</dbReference>
<evidence type="ECO:0000255" key="1">
    <source>
        <dbReference type="HAMAP-Rule" id="MF_01307"/>
    </source>
</evidence>
<evidence type="ECO:0000305" key="2"/>